<sequence length="299" mass="36429">MSYWINKSICKLNYDSIDNIINTIEPHKPYNNNYCKDNFNIKYLDENNILDYYSFLYKNYNYKFNLDTIKWLLLNPFSKKEYNILLYNEDKIAGTISGIKKTISLHKKIYDCIHVTFLCIDKDYRNKYLHYFLIDEIMKNAKKNDIIIALFNSNIKFNNVKYINEYDTYITYGNKNLIKKSDYFNYELLNKKTQDLFFIYTIEEYNYWFNNNHVVVISYNNNFIALLKTNMLINKNIIQIFIIMEMYIRNNNIHKNYIPNNTIIYENYKCLKTIKLKSKLISYIYNYNFNNLSESIYLF</sequence>
<reference key="1">
    <citation type="journal article" date="2000" name="Virology">
        <title>Complete genomic sequence of the Amsacta moorei entomopoxvirus: analysis and comparison with other poxviruses.</title>
        <authorList>
            <person name="Bawden A.L."/>
            <person name="Glassberg K.J."/>
            <person name="Diggans J."/>
            <person name="Shaw R."/>
            <person name="Farmerie W."/>
            <person name="Moyer R.W."/>
        </authorList>
    </citation>
    <scope>NUCLEOTIDE SEQUENCE [LARGE SCALE GENOMIC DNA]</scope>
</reference>
<reference key="2">
    <citation type="journal article" date="2002" name="J. Mol. Biol.">
        <title>N-terminal N-myristoylation of proteins: refinement of the sequence motif and its taxon-specific differences.</title>
        <authorList>
            <person name="Maurer-Stroh S."/>
            <person name="Eisenhaber B."/>
            <person name="Eisenhaber F."/>
        </authorList>
    </citation>
    <scope>POSSIBLE FUNCTION</scope>
</reference>
<gene>
    <name type="ordered locus">AMV219</name>
</gene>
<proteinExistence type="inferred from homology"/>
<organism>
    <name type="scientific">Amsacta moorei entomopoxvirus</name>
    <name type="common">AmEPV</name>
    <dbReference type="NCBI Taxonomy" id="28321"/>
    <lineage>
        <taxon>Viruses</taxon>
        <taxon>Varidnaviria</taxon>
        <taxon>Bamfordvirae</taxon>
        <taxon>Nucleocytoviricota</taxon>
        <taxon>Pokkesviricetes</taxon>
        <taxon>Chitovirales</taxon>
        <taxon>Poxviridae</taxon>
        <taxon>Entomopoxvirinae</taxon>
        <taxon>Betaentomopoxvirus</taxon>
    </lineage>
</organism>
<evidence type="ECO:0000305" key="1"/>
<organismHost>
    <name type="scientific">Amsacta</name>
    <dbReference type="NCBI Taxonomy" id="340055"/>
</organismHost>
<keyword id="KW-0012">Acyltransferase</keyword>
<keyword id="KW-1185">Reference proteome</keyword>
<keyword id="KW-0808">Transferase</keyword>
<name>NMT_AMEPV</name>
<comment type="function">
    <text evidence="1">Adds a myristoyl group to the N-terminal glycine residue of certain proteins.</text>
</comment>
<comment type="catalytic activity">
    <reaction>
        <text>N-terminal glycyl-[protein] + tetradecanoyl-CoA = N-tetradecanoylglycyl-[protein] + CoA + H(+)</text>
        <dbReference type="Rhea" id="RHEA:15521"/>
        <dbReference type="Rhea" id="RHEA-COMP:12666"/>
        <dbReference type="Rhea" id="RHEA-COMP:12667"/>
        <dbReference type="ChEBI" id="CHEBI:15378"/>
        <dbReference type="ChEBI" id="CHEBI:57287"/>
        <dbReference type="ChEBI" id="CHEBI:57385"/>
        <dbReference type="ChEBI" id="CHEBI:64723"/>
        <dbReference type="ChEBI" id="CHEBI:133050"/>
        <dbReference type="EC" id="2.3.1.97"/>
    </reaction>
</comment>
<comment type="similarity">
    <text evidence="1">Belongs to the NMT family.</text>
</comment>
<feature type="chain" id="PRO_0000064249" description="Putative glycylpeptide N-tetradecanoyltransferase">
    <location>
        <begin position="1"/>
        <end position="299"/>
    </location>
</feature>
<protein>
    <recommendedName>
        <fullName>Putative glycylpeptide N-tetradecanoyltransferase</fullName>
        <ecNumber>2.3.1.97</ecNumber>
    </recommendedName>
    <alternativeName>
        <fullName>Myristoyl-CoA:protein N-myristoyltransferase</fullName>
        <shortName>NMT</shortName>
    </alternativeName>
    <alternativeName>
        <fullName>Peptide N-myristoyltransferase</fullName>
    </alternativeName>
</protein>
<dbReference type="EC" id="2.3.1.97"/>
<dbReference type="EMBL" id="AF250284">
    <property type="protein sequence ID" value="AAG02925.1"/>
    <property type="molecule type" value="Genomic_DNA"/>
</dbReference>
<dbReference type="RefSeq" id="NP_065001.1">
    <property type="nucleotide sequence ID" value="NC_002520.1"/>
</dbReference>
<dbReference type="SMR" id="Q9EMI7"/>
<dbReference type="GeneID" id="1494809"/>
<dbReference type="KEGG" id="vg:1494809"/>
<dbReference type="OrthoDB" id="16550at10239"/>
<dbReference type="Proteomes" id="UP000000872">
    <property type="component" value="Genome"/>
</dbReference>
<dbReference type="GO" id="GO:0004379">
    <property type="term" value="F:glycylpeptide N-tetradecanoyltransferase activity"/>
    <property type="evidence" value="ECO:0007669"/>
    <property type="project" value="UniProtKB-EC"/>
</dbReference>
<dbReference type="Gene3D" id="3.40.630.30">
    <property type="match status" value="1"/>
</dbReference>
<dbReference type="InterPro" id="IPR016181">
    <property type="entry name" value="Acyl_CoA_acyltransferase"/>
</dbReference>
<dbReference type="InterPro" id="IPR000903">
    <property type="entry name" value="NMT"/>
</dbReference>
<dbReference type="InterPro" id="IPR022676">
    <property type="entry name" value="NMT_N"/>
</dbReference>
<dbReference type="PANTHER" id="PTHR11377:SF5">
    <property type="entry name" value="GLYCYLPEPTIDE N-TETRADECANOYLTRANSFERASE"/>
    <property type="match status" value="1"/>
</dbReference>
<dbReference type="PANTHER" id="PTHR11377">
    <property type="entry name" value="N-MYRISTOYL TRANSFERASE"/>
    <property type="match status" value="1"/>
</dbReference>
<dbReference type="Pfam" id="PF01233">
    <property type="entry name" value="NMT"/>
    <property type="match status" value="1"/>
</dbReference>
<dbReference type="SUPFAM" id="SSF55729">
    <property type="entry name" value="Acyl-CoA N-acyltransferases (Nat)"/>
    <property type="match status" value="1"/>
</dbReference>
<accession>Q9EMI7</accession>